<keyword id="KW-0521">NADP</keyword>
<keyword id="KW-0560">Oxidoreductase</keyword>
<keyword id="KW-0627">Porphyrin biosynthesis</keyword>
<keyword id="KW-1185">Reference proteome</keyword>
<protein>
    <recommendedName>
        <fullName evidence="1">Glutamyl-tRNA reductase</fullName>
        <shortName evidence="1">GluTR</shortName>
        <ecNumber evidence="1">1.2.1.70</ecNumber>
    </recommendedName>
</protein>
<sequence length="443" mass="49780">MHLIAVSINHRTADVALREKVAFKDDAIRSANVDLYETKSILENVILSTCNRTEVYAVADQIHTGRYYIQRFLARSFGLDVEDIKNMTEVKVGDEAVKHLLQVTSGLDSVVLGETQILGQIRNAFFLAQEEDTTGTIFNHLFKQAITFAKKAHNETDIADNAVSVSYAAVELSKKVFGKVNNKQALIIGAGDMSELSLLNLIGSGVTDITIVNRTLSKAQDLAMKHHVKFEPMESLPRLLVDVDIVISSTSSENYIVTNEMLQSISTERKHDSLVMIDIAVPRDIEPNIDTIHDMFSYDVDDLKGLVDANLRERQLAAEQIIQNIPNEIEAHNEWVNMLGVVPVIRALREKAMSIQEDTMDSIDRKLPGLSERERKIISKHTKSIINQMLKDPIKQAKELSSDKKSNEKLELFQSIFDIEAENAYEAKKQKNNMKTGQILSFE</sequence>
<reference key="1">
    <citation type="journal article" date="2005" name="Proc. Natl. Acad. Sci. U.S.A.">
        <title>Whole genome sequence of Staphylococcus saprophyticus reveals the pathogenesis of uncomplicated urinary tract infection.</title>
        <authorList>
            <person name="Kuroda M."/>
            <person name="Yamashita A."/>
            <person name="Hirakawa H."/>
            <person name="Kumano M."/>
            <person name="Morikawa K."/>
            <person name="Higashide M."/>
            <person name="Maruyama A."/>
            <person name="Inose Y."/>
            <person name="Matoba K."/>
            <person name="Toh H."/>
            <person name="Kuhara S."/>
            <person name="Hattori M."/>
            <person name="Ohta T."/>
        </authorList>
    </citation>
    <scope>NUCLEOTIDE SEQUENCE [LARGE SCALE GENOMIC DNA]</scope>
    <source>
        <strain>ATCC 15305 / DSM 20229 / NCIMB 8711 / NCTC 7292 / S-41</strain>
    </source>
</reference>
<organism>
    <name type="scientific">Staphylococcus saprophyticus subsp. saprophyticus (strain ATCC 15305 / DSM 20229 / NCIMB 8711 / NCTC 7292 / S-41)</name>
    <dbReference type="NCBI Taxonomy" id="342451"/>
    <lineage>
        <taxon>Bacteria</taxon>
        <taxon>Bacillati</taxon>
        <taxon>Bacillota</taxon>
        <taxon>Bacilli</taxon>
        <taxon>Bacillales</taxon>
        <taxon>Staphylococcaceae</taxon>
        <taxon>Staphylococcus</taxon>
    </lineage>
</organism>
<evidence type="ECO:0000255" key="1">
    <source>
        <dbReference type="HAMAP-Rule" id="MF_00087"/>
    </source>
</evidence>
<comment type="function">
    <text evidence="1">Catalyzes the NADPH-dependent reduction of glutamyl-tRNA(Glu) to glutamate 1-semialdehyde (GSA).</text>
</comment>
<comment type="catalytic activity">
    <reaction evidence="1">
        <text>(S)-4-amino-5-oxopentanoate + tRNA(Glu) + NADP(+) = L-glutamyl-tRNA(Glu) + NADPH + H(+)</text>
        <dbReference type="Rhea" id="RHEA:12344"/>
        <dbReference type="Rhea" id="RHEA-COMP:9663"/>
        <dbReference type="Rhea" id="RHEA-COMP:9680"/>
        <dbReference type="ChEBI" id="CHEBI:15378"/>
        <dbReference type="ChEBI" id="CHEBI:57501"/>
        <dbReference type="ChEBI" id="CHEBI:57783"/>
        <dbReference type="ChEBI" id="CHEBI:58349"/>
        <dbReference type="ChEBI" id="CHEBI:78442"/>
        <dbReference type="ChEBI" id="CHEBI:78520"/>
        <dbReference type="EC" id="1.2.1.70"/>
    </reaction>
</comment>
<comment type="pathway">
    <text evidence="1">Porphyrin-containing compound metabolism; protoporphyrin-IX biosynthesis; 5-aminolevulinate from L-glutamyl-tRNA(Glu): step 1/2.</text>
</comment>
<comment type="subunit">
    <text evidence="1">Homodimer.</text>
</comment>
<comment type="domain">
    <text evidence="1">Possesses an unusual extended V-shaped dimeric structure with each monomer consisting of three distinct domains arranged along a curved 'spinal' alpha-helix. The N-terminal catalytic domain specifically recognizes the glutamate moiety of the substrate. The second domain is the NADPH-binding domain, and the third C-terminal domain is responsible for dimerization.</text>
</comment>
<comment type="miscellaneous">
    <text evidence="1">During catalysis, the active site Cys acts as a nucleophile attacking the alpha-carbonyl group of tRNA-bound glutamate with the formation of a thioester intermediate between enzyme and glutamate, and the concomitant release of tRNA(Glu). The thioester intermediate is finally reduced by direct hydride transfer from NADPH, to form the product GSA.</text>
</comment>
<comment type="similarity">
    <text evidence="1">Belongs to the glutamyl-tRNA reductase family.</text>
</comment>
<proteinExistence type="inferred from homology"/>
<name>HEM1_STAS1</name>
<gene>
    <name evidence="1" type="primary">hemA</name>
    <name type="ordered locus">SSP1092</name>
</gene>
<feature type="chain" id="PRO_1000004705" description="Glutamyl-tRNA reductase">
    <location>
        <begin position="1"/>
        <end position="443"/>
    </location>
</feature>
<feature type="active site" description="Nucleophile" evidence="1">
    <location>
        <position position="50"/>
    </location>
</feature>
<feature type="binding site" evidence="1">
    <location>
        <begin position="49"/>
        <end position="52"/>
    </location>
    <ligand>
        <name>substrate</name>
    </ligand>
</feature>
<feature type="binding site" evidence="1">
    <location>
        <position position="109"/>
    </location>
    <ligand>
        <name>substrate</name>
    </ligand>
</feature>
<feature type="binding site" evidence="1">
    <location>
        <begin position="114"/>
        <end position="116"/>
    </location>
    <ligand>
        <name>substrate</name>
    </ligand>
</feature>
<feature type="binding site" evidence="1">
    <location>
        <position position="120"/>
    </location>
    <ligand>
        <name>substrate</name>
    </ligand>
</feature>
<feature type="binding site" evidence="1">
    <location>
        <begin position="189"/>
        <end position="194"/>
    </location>
    <ligand>
        <name>NADP(+)</name>
        <dbReference type="ChEBI" id="CHEBI:58349"/>
    </ligand>
</feature>
<feature type="site" description="Important for activity" evidence="1">
    <location>
        <position position="99"/>
    </location>
</feature>
<accession>Q49YA4</accession>
<dbReference type="EC" id="1.2.1.70" evidence="1"/>
<dbReference type="EMBL" id="AP008934">
    <property type="protein sequence ID" value="BAE18237.1"/>
    <property type="molecule type" value="Genomic_DNA"/>
</dbReference>
<dbReference type="RefSeq" id="WP_011302928.1">
    <property type="nucleotide sequence ID" value="NC_007350.1"/>
</dbReference>
<dbReference type="SMR" id="Q49YA4"/>
<dbReference type="GeneID" id="3614934"/>
<dbReference type="KEGG" id="ssp:SSP1092"/>
<dbReference type="PATRIC" id="fig|342451.11.peg.1091"/>
<dbReference type="eggNOG" id="COG0373">
    <property type="taxonomic scope" value="Bacteria"/>
</dbReference>
<dbReference type="HOGENOM" id="CLU_035113_2_2_9"/>
<dbReference type="OrthoDB" id="110209at2"/>
<dbReference type="UniPathway" id="UPA00251">
    <property type="reaction ID" value="UER00316"/>
</dbReference>
<dbReference type="Proteomes" id="UP000006371">
    <property type="component" value="Chromosome"/>
</dbReference>
<dbReference type="GO" id="GO:0008883">
    <property type="term" value="F:glutamyl-tRNA reductase activity"/>
    <property type="evidence" value="ECO:0007669"/>
    <property type="project" value="UniProtKB-UniRule"/>
</dbReference>
<dbReference type="GO" id="GO:0050661">
    <property type="term" value="F:NADP binding"/>
    <property type="evidence" value="ECO:0007669"/>
    <property type="project" value="InterPro"/>
</dbReference>
<dbReference type="GO" id="GO:0006782">
    <property type="term" value="P:protoporphyrinogen IX biosynthetic process"/>
    <property type="evidence" value="ECO:0007669"/>
    <property type="project" value="UniProtKB-UniRule"/>
</dbReference>
<dbReference type="CDD" id="cd05213">
    <property type="entry name" value="NAD_bind_Glutamyl_tRNA_reduct"/>
    <property type="match status" value="1"/>
</dbReference>
<dbReference type="FunFam" id="3.30.460.30:FF:000001">
    <property type="entry name" value="Glutamyl-tRNA reductase"/>
    <property type="match status" value="1"/>
</dbReference>
<dbReference type="FunFam" id="3.40.50.720:FF:000031">
    <property type="entry name" value="Glutamyl-tRNA reductase"/>
    <property type="match status" value="1"/>
</dbReference>
<dbReference type="Gene3D" id="3.30.460.30">
    <property type="entry name" value="Glutamyl-tRNA reductase, N-terminal domain"/>
    <property type="match status" value="1"/>
</dbReference>
<dbReference type="Gene3D" id="3.40.50.720">
    <property type="entry name" value="NAD(P)-binding Rossmann-like Domain"/>
    <property type="match status" value="1"/>
</dbReference>
<dbReference type="HAMAP" id="MF_00087">
    <property type="entry name" value="Glu_tRNA_reductase"/>
    <property type="match status" value="1"/>
</dbReference>
<dbReference type="InterPro" id="IPR000343">
    <property type="entry name" value="4pyrrol_synth_GluRdtase"/>
</dbReference>
<dbReference type="InterPro" id="IPR015896">
    <property type="entry name" value="4pyrrol_synth_GluRdtase_dimer"/>
</dbReference>
<dbReference type="InterPro" id="IPR015895">
    <property type="entry name" value="4pyrrol_synth_GluRdtase_N"/>
</dbReference>
<dbReference type="InterPro" id="IPR018214">
    <property type="entry name" value="GluRdtase_CS"/>
</dbReference>
<dbReference type="InterPro" id="IPR036453">
    <property type="entry name" value="GluRdtase_dimer_dom_sf"/>
</dbReference>
<dbReference type="InterPro" id="IPR036343">
    <property type="entry name" value="GluRdtase_N_sf"/>
</dbReference>
<dbReference type="InterPro" id="IPR036291">
    <property type="entry name" value="NAD(P)-bd_dom_sf"/>
</dbReference>
<dbReference type="InterPro" id="IPR006151">
    <property type="entry name" value="Shikm_DH/Glu-tRNA_Rdtase"/>
</dbReference>
<dbReference type="NCBIfam" id="TIGR01035">
    <property type="entry name" value="hemA"/>
    <property type="match status" value="1"/>
</dbReference>
<dbReference type="PANTHER" id="PTHR43120">
    <property type="entry name" value="GLUTAMYL-TRNA REDUCTASE 1, CHLOROPLASTIC"/>
    <property type="match status" value="1"/>
</dbReference>
<dbReference type="PANTHER" id="PTHR43120:SF1">
    <property type="entry name" value="GLUTAMYL-TRNA REDUCTASE 1, CHLOROPLASTIC"/>
    <property type="match status" value="1"/>
</dbReference>
<dbReference type="Pfam" id="PF00745">
    <property type="entry name" value="GlutR_dimer"/>
    <property type="match status" value="1"/>
</dbReference>
<dbReference type="Pfam" id="PF05201">
    <property type="entry name" value="GlutR_N"/>
    <property type="match status" value="1"/>
</dbReference>
<dbReference type="Pfam" id="PF01488">
    <property type="entry name" value="Shikimate_DH"/>
    <property type="match status" value="1"/>
</dbReference>
<dbReference type="PIRSF" id="PIRSF000445">
    <property type="entry name" value="4pyrrol_synth_GluRdtase"/>
    <property type="match status" value="1"/>
</dbReference>
<dbReference type="SUPFAM" id="SSF69742">
    <property type="entry name" value="Glutamyl tRNA-reductase catalytic, N-terminal domain"/>
    <property type="match status" value="1"/>
</dbReference>
<dbReference type="SUPFAM" id="SSF69075">
    <property type="entry name" value="Glutamyl tRNA-reductase dimerization domain"/>
    <property type="match status" value="1"/>
</dbReference>
<dbReference type="SUPFAM" id="SSF51735">
    <property type="entry name" value="NAD(P)-binding Rossmann-fold domains"/>
    <property type="match status" value="1"/>
</dbReference>
<dbReference type="PROSITE" id="PS00747">
    <property type="entry name" value="GLUTR"/>
    <property type="match status" value="1"/>
</dbReference>